<dbReference type="EMBL" id="CP001063">
    <property type="protein sequence ID" value="ACD08261.1"/>
    <property type="molecule type" value="Genomic_DNA"/>
</dbReference>
<dbReference type="RefSeq" id="WP_000828351.1">
    <property type="nucleotide sequence ID" value="NC_010658.1"/>
</dbReference>
<dbReference type="SMR" id="B2U0T2"/>
<dbReference type="STRING" id="344609.SbBS512_E3336"/>
<dbReference type="GeneID" id="93779084"/>
<dbReference type="KEGG" id="sbc:SbBS512_E3336"/>
<dbReference type="HOGENOM" id="CLU_063829_0_0_6"/>
<dbReference type="Proteomes" id="UP000001030">
    <property type="component" value="Chromosome"/>
</dbReference>
<dbReference type="GO" id="GO:0003677">
    <property type="term" value="F:DNA binding"/>
    <property type="evidence" value="ECO:0007669"/>
    <property type="project" value="UniProtKB-UniRule"/>
</dbReference>
<dbReference type="GO" id="GO:0003700">
    <property type="term" value="F:DNA-binding transcription factor activity"/>
    <property type="evidence" value="ECO:0007669"/>
    <property type="project" value="UniProtKB-UniRule"/>
</dbReference>
<dbReference type="CDD" id="cd08428">
    <property type="entry name" value="PBP2_IciA_ArgP"/>
    <property type="match status" value="1"/>
</dbReference>
<dbReference type="FunFam" id="1.10.10.10:FF:000061">
    <property type="entry name" value="HTH-type transcriptional regulator ArgP"/>
    <property type="match status" value="1"/>
</dbReference>
<dbReference type="FunFam" id="3.40.190.290:FF:000002">
    <property type="entry name" value="HTH-type transcriptional regulator ArgP"/>
    <property type="match status" value="1"/>
</dbReference>
<dbReference type="Gene3D" id="3.40.190.290">
    <property type="match status" value="1"/>
</dbReference>
<dbReference type="Gene3D" id="1.10.10.10">
    <property type="entry name" value="Winged helix-like DNA-binding domain superfamily/Winged helix DNA-binding domain"/>
    <property type="match status" value="1"/>
</dbReference>
<dbReference type="HAMAP" id="MF_00513">
    <property type="entry name" value="HTH_type_ArgP"/>
    <property type="match status" value="1"/>
</dbReference>
<dbReference type="InterPro" id="IPR017685">
    <property type="entry name" value="ArgP"/>
</dbReference>
<dbReference type="InterPro" id="IPR023490">
    <property type="entry name" value="ArgP_gammaproteobact"/>
</dbReference>
<dbReference type="InterPro" id="IPR050176">
    <property type="entry name" value="LTTR"/>
</dbReference>
<dbReference type="InterPro" id="IPR005119">
    <property type="entry name" value="LysR_subst-bd"/>
</dbReference>
<dbReference type="InterPro" id="IPR000847">
    <property type="entry name" value="Tscrpt_reg_HTH_LysR"/>
</dbReference>
<dbReference type="InterPro" id="IPR036388">
    <property type="entry name" value="WH-like_DNA-bd_sf"/>
</dbReference>
<dbReference type="InterPro" id="IPR036390">
    <property type="entry name" value="WH_DNA-bd_sf"/>
</dbReference>
<dbReference type="NCBIfam" id="TIGR03298">
    <property type="entry name" value="argP"/>
    <property type="match status" value="1"/>
</dbReference>
<dbReference type="NCBIfam" id="NF002964">
    <property type="entry name" value="PRK03635.1"/>
    <property type="match status" value="1"/>
</dbReference>
<dbReference type="NCBIfam" id="NF009888">
    <property type="entry name" value="PRK13348.1"/>
    <property type="match status" value="1"/>
</dbReference>
<dbReference type="PANTHER" id="PTHR30579:SF2">
    <property type="entry name" value="HTH-TYPE TRANSCRIPTIONAL REGULATOR ARGP"/>
    <property type="match status" value="1"/>
</dbReference>
<dbReference type="PANTHER" id="PTHR30579">
    <property type="entry name" value="TRANSCRIPTIONAL REGULATOR"/>
    <property type="match status" value="1"/>
</dbReference>
<dbReference type="Pfam" id="PF00126">
    <property type="entry name" value="HTH_1"/>
    <property type="match status" value="1"/>
</dbReference>
<dbReference type="Pfam" id="PF03466">
    <property type="entry name" value="LysR_substrate"/>
    <property type="match status" value="1"/>
</dbReference>
<dbReference type="PRINTS" id="PR00039">
    <property type="entry name" value="HTHLYSR"/>
</dbReference>
<dbReference type="SUPFAM" id="SSF53850">
    <property type="entry name" value="Periplasmic binding protein-like II"/>
    <property type="match status" value="1"/>
</dbReference>
<dbReference type="SUPFAM" id="SSF46785">
    <property type="entry name" value="Winged helix' DNA-binding domain"/>
    <property type="match status" value="1"/>
</dbReference>
<dbReference type="PROSITE" id="PS50931">
    <property type="entry name" value="HTH_LYSR"/>
    <property type="match status" value="1"/>
</dbReference>
<evidence type="ECO:0000255" key="1">
    <source>
        <dbReference type="HAMAP-Rule" id="MF_00513"/>
    </source>
</evidence>
<evidence type="ECO:0000305" key="2"/>
<protein>
    <recommendedName>
        <fullName evidence="1">HTH-type transcriptional regulator ArgP</fullName>
    </recommendedName>
</protein>
<name>ARGP_SHIB3</name>
<feature type="chain" id="PRO_1000127286" description="HTH-type transcriptional regulator ArgP">
    <location>
        <begin position="1"/>
        <end position="297"/>
    </location>
</feature>
<feature type="domain" description="HTH lysR-type" evidence="1">
    <location>
        <begin position="4"/>
        <end position="60"/>
    </location>
</feature>
<feature type="DNA-binding region" description="H-T-H motif" evidence="1">
    <location>
        <begin position="21"/>
        <end position="40"/>
    </location>
</feature>
<sequence>MKRPDYRTLQALDAVIRERGFERAAQKLCITQSAVSQRIKQLENMFGQPLLVRTVPPRPTEQGQKLLALLRQVELLEEEWLGDEQTGSTPLLLSLAVNADSLATWLLPALAPVLADSPIRLNLQVEDETRTQERLRRGEVVGAVSIQHQALPSCLVDKLGALDYLFVSSKPFAEKYFPNGVTRSALLKAPVVAFDHLDDMHQAFLQQNFDLPPGSVPCHIVNSSEAFVQLARQGTTCCMIPHLQIEKELASGELIDLTPGLFQRRMLYWHRFAPESRMMRKVTDALLDYGHKVLRQD</sequence>
<comment type="function">
    <text evidence="1">Controls the transcription of genes involved in arginine and lysine metabolism.</text>
</comment>
<comment type="subunit">
    <text evidence="1">Homodimer.</text>
</comment>
<comment type="similarity">
    <text evidence="2">Belongs to the LysR transcriptional regulatory family.</text>
</comment>
<keyword id="KW-0238">DNA-binding</keyword>
<keyword id="KW-1185">Reference proteome</keyword>
<keyword id="KW-0804">Transcription</keyword>
<keyword id="KW-0805">Transcription regulation</keyword>
<gene>
    <name evidence="1" type="primary">argP</name>
    <name type="synonym">iciA</name>
    <name type="ordered locus">SbBS512_E3336</name>
</gene>
<reference key="1">
    <citation type="submission" date="2008-05" db="EMBL/GenBank/DDBJ databases">
        <title>Complete sequence of Shigella boydii serotype 18 strain BS512.</title>
        <authorList>
            <person name="Rasko D.A."/>
            <person name="Rosovitz M."/>
            <person name="Maurelli A.T."/>
            <person name="Myers G."/>
            <person name="Seshadri R."/>
            <person name="Cer R."/>
            <person name="Jiang L."/>
            <person name="Ravel J."/>
            <person name="Sebastian Y."/>
        </authorList>
    </citation>
    <scope>NUCLEOTIDE SEQUENCE [LARGE SCALE GENOMIC DNA]</scope>
    <source>
        <strain>CDC 3083-94 / BS512</strain>
    </source>
</reference>
<proteinExistence type="inferred from homology"/>
<accession>B2U0T2</accession>
<organism>
    <name type="scientific">Shigella boydii serotype 18 (strain CDC 3083-94 / BS512)</name>
    <dbReference type="NCBI Taxonomy" id="344609"/>
    <lineage>
        <taxon>Bacteria</taxon>
        <taxon>Pseudomonadati</taxon>
        <taxon>Pseudomonadota</taxon>
        <taxon>Gammaproteobacteria</taxon>
        <taxon>Enterobacterales</taxon>
        <taxon>Enterobacteriaceae</taxon>
        <taxon>Shigella</taxon>
    </lineage>
</organism>